<gene>
    <name evidence="1" type="primary">aroB'</name>
    <name type="ordered locus">MmarC5_1678</name>
</gene>
<dbReference type="EC" id="1.4.1.24" evidence="1"/>
<dbReference type="EMBL" id="CP000609">
    <property type="protein sequence ID" value="ABO35975.1"/>
    <property type="molecule type" value="Genomic_DNA"/>
</dbReference>
<dbReference type="RefSeq" id="WP_011869422.1">
    <property type="nucleotide sequence ID" value="NC_009135.1"/>
</dbReference>
<dbReference type="STRING" id="402880.MmarC5_1678"/>
<dbReference type="GeneID" id="4929355"/>
<dbReference type="KEGG" id="mmq:MmarC5_1678"/>
<dbReference type="eggNOG" id="arCOG04353">
    <property type="taxonomic scope" value="Archaea"/>
</dbReference>
<dbReference type="HOGENOM" id="CLU_056379_0_0_2"/>
<dbReference type="OrthoDB" id="10265at2157"/>
<dbReference type="Proteomes" id="UP000000253">
    <property type="component" value="Chromosome"/>
</dbReference>
<dbReference type="GO" id="GO:0003856">
    <property type="term" value="F:3-dehydroquinate synthase activity"/>
    <property type="evidence" value="ECO:0007669"/>
    <property type="project" value="InterPro"/>
</dbReference>
<dbReference type="GO" id="GO:0102042">
    <property type="term" value="F:dehydroquinate synthase activity"/>
    <property type="evidence" value="ECO:0007669"/>
    <property type="project" value="UniProtKB-EC"/>
</dbReference>
<dbReference type="GO" id="GO:0051287">
    <property type="term" value="F:NAD binding"/>
    <property type="evidence" value="ECO:0007669"/>
    <property type="project" value="UniProtKB-UniRule"/>
</dbReference>
<dbReference type="GO" id="GO:0008652">
    <property type="term" value="P:amino acid biosynthetic process"/>
    <property type="evidence" value="ECO:0007669"/>
    <property type="project" value="UniProtKB-KW"/>
</dbReference>
<dbReference type="GO" id="GO:0009073">
    <property type="term" value="P:aromatic amino acid family biosynthetic process"/>
    <property type="evidence" value="ECO:0007669"/>
    <property type="project" value="UniProtKB-UniRule"/>
</dbReference>
<dbReference type="HAMAP" id="MF_01244">
    <property type="entry name" value="Arch_DHQ_synthase"/>
    <property type="match status" value="1"/>
</dbReference>
<dbReference type="InterPro" id="IPR002812">
    <property type="entry name" value="DHQ_synth"/>
</dbReference>
<dbReference type="NCBIfam" id="NF002624">
    <property type="entry name" value="PRK02290.1-2"/>
    <property type="match status" value="1"/>
</dbReference>
<dbReference type="NCBIfam" id="NF002627">
    <property type="entry name" value="PRK02290.1-5"/>
    <property type="match status" value="1"/>
</dbReference>
<dbReference type="PANTHER" id="PTHR33563">
    <property type="match status" value="1"/>
</dbReference>
<dbReference type="PANTHER" id="PTHR33563:SF1">
    <property type="entry name" value="3-DEHYDROQUINATE SYNTHASE"/>
    <property type="match status" value="1"/>
</dbReference>
<dbReference type="Pfam" id="PF01959">
    <property type="entry name" value="DHQS"/>
    <property type="match status" value="1"/>
</dbReference>
<dbReference type="PIRSF" id="PIRSF006655">
    <property type="entry name" value="DHQ_synth"/>
    <property type="match status" value="1"/>
</dbReference>
<reference key="1">
    <citation type="submission" date="2007-03" db="EMBL/GenBank/DDBJ databases">
        <title>Complete sequence of chromosome of Methanococcus maripaludis C5.</title>
        <authorList>
            <consortium name="US DOE Joint Genome Institute"/>
            <person name="Copeland A."/>
            <person name="Lucas S."/>
            <person name="Lapidus A."/>
            <person name="Barry K."/>
            <person name="Glavina del Rio T."/>
            <person name="Dalin E."/>
            <person name="Tice H."/>
            <person name="Pitluck S."/>
            <person name="Chertkov O."/>
            <person name="Brettin T."/>
            <person name="Bruce D."/>
            <person name="Han C."/>
            <person name="Detter J.C."/>
            <person name="Schmutz J."/>
            <person name="Larimer F."/>
            <person name="Land M."/>
            <person name="Hauser L."/>
            <person name="Kyrpides N."/>
            <person name="Mikhailova N."/>
            <person name="Sieprawska-Lupa M."/>
            <person name="Whitman W.B."/>
            <person name="Richardson P."/>
        </authorList>
    </citation>
    <scope>NUCLEOTIDE SEQUENCE [LARGE SCALE GENOMIC DNA]</scope>
    <source>
        <strain>C5 / ATCC BAA-1333</strain>
    </source>
</reference>
<feature type="chain" id="PRO_1000067066" description="3-dehydroquinate synthase">
    <location>
        <begin position="1"/>
        <end position="361"/>
    </location>
</feature>
<keyword id="KW-0028">Amino-acid biosynthesis</keyword>
<keyword id="KW-0057">Aromatic amino acid biosynthesis</keyword>
<keyword id="KW-0520">NAD</keyword>
<keyword id="KW-0560">Oxidoreductase</keyword>
<protein>
    <recommendedName>
        <fullName evidence="1">3-dehydroquinate synthase</fullName>
        <shortName evidence="1">DHQ synthase</shortName>
        <ecNumber evidence="1">1.4.1.24</ecNumber>
    </recommendedName>
    <alternativeName>
        <fullName evidence="1">3-dehydroquinate synthase II</fullName>
    </alternativeName>
</protein>
<organism>
    <name type="scientific">Methanococcus maripaludis (strain C5 / ATCC BAA-1333)</name>
    <dbReference type="NCBI Taxonomy" id="402880"/>
    <lineage>
        <taxon>Archaea</taxon>
        <taxon>Methanobacteriati</taxon>
        <taxon>Methanobacteriota</taxon>
        <taxon>Methanomada group</taxon>
        <taxon>Methanococci</taxon>
        <taxon>Methanococcales</taxon>
        <taxon>Methanococcaceae</taxon>
        <taxon>Methanococcus</taxon>
    </lineage>
</organism>
<name>DHQS_METM5</name>
<proteinExistence type="inferred from homology"/>
<comment type="function">
    <text evidence="1">Catalyzes the oxidative deamination and cyclization of 2-amino-3,7-dideoxy-D-threo-hept-6-ulosonic acid (ADH) to yield 3-dehydroquinate (DHQ), which is fed into the canonical shikimic pathway of aromatic amino acid biosynthesis.</text>
</comment>
<comment type="catalytic activity">
    <reaction evidence="1">
        <text>2-amino-2,3,7-trideoxy-D-lyxo-hept-6-ulosonate + NAD(+) + H2O = 3-dehydroquinate + NH4(+) + NADH + H(+)</text>
        <dbReference type="Rhea" id="RHEA:25956"/>
        <dbReference type="ChEBI" id="CHEBI:15377"/>
        <dbReference type="ChEBI" id="CHEBI:15378"/>
        <dbReference type="ChEBI" id="CHEBI:28938"/>
        <dbReference type="ChEBI" id="CHEBI:32364"/>
        <dbReference type="ChEBI" id="CHEBI:57540"/>
        <dbReference type="ChEBI" id="CHEBI:57945"/>
        <dbReference type="ChEBI" id="CHEBI:58859"/>
        <dbReference type="EC" id="1.4.1.24"/>
    </reaction>
</comment>
<comment type="similarity">
    <text evidence="1">Belongs to the archaeal-type DHQ synthase family.</text>
</comment>
<accession>A4G0J1</accession>
<sequence length="361" mass="40014">MKFGWIKTTGTDSEERMESVKDALESSIPGLMVEKEEISSVRELGNIKIVSDSLDADVVLINKGEDLEILKSAKLSGKETAVYVEINTKDDEVYATEVSKLDFVDYVVLEGSDWTIIPLENIIADLFGEEIKIVSVVTNVKDAEAAYEILEKGVDGVVLIPEDINEVKDFSKLIERMNSESLKLDYATVTKIEPVGSGDRVCIDTCSMMEMGEGMLIGSYSRGMFLVHSETVENPYVATRPFRVNAGPVHAYILCPENKTKYLSDLKAGDKVLVVNKNGETRESIIGRVKIEKRPLFLVEAEYNGENLRTILQNAETIRLVGEDGKPVSVVDLKVGTKVLIKPDENARHFGMAIKETIVEK</sequence>
<evidence type="ECO:0000255" key="1">
    <source>
        <dbReference type="HAMAP-Rule" id="MF_01244"/>
    </source>
</evidence>